<comment type="function">
    <text evidence="1">NDH-1 shuttles electrons from NADH, via FMN and iron-sulfur (Fe-S) centers, to quinones in the respiratory chain. The immediate electron acceptor for the enzyme in this species is believed to be ubiquinone. Couples the redox reaction to proton translocation (for every two electrons transferred, four hydrogen ions are translocated across the cytoplasmic membrane), and thus conserves the redox energy in a proton gradient.</text>
</comment>
<comment type="catalytic activity">
    <reaction evidence="1">
        <text>a quinone + NADH + 5 H(+)(in) = a quinol + NAD(+) + 4 H(+)(out)</text>
        <dbReference type="Rhea" id="RHEA:57888"/>
        <dbReference type="ChEBI" id="CHEBI:15378"/>
        <dbReference type="ChEBI" id="CHEBI:24646"/>
        <dbReference type="ChEBI" id="CHEBI:57540"/>
        <dbReference type="ChEBI" id="CHEBI:57945"/>
        <dbReference type="ChEBI" id="CHEBI:132124"/>
    </reaction>
</comment>
<comment type="subunit">
    <text evidence="1">NDH-1 is composed of 14 different subunits. Subunits NuoA, H, J, K, L, M, N constitute the membrane sector of the complex.</text>
</comment>
<comment type="subcellular location">
    <subcellularLocation>
        <location evidence="1">Cell inner membrane</location>
        <topology evidence="1">Multi-pass membrane protein</topology>
    </subcellularLocation>
</comment>
<comment type="similarity">
    <text evidence="1">Belongs to the complex I subunit 4L family.</text>
</comment>
<dbReference type="EC" id="7.1.1.-" evidence="1"/>
<dbReference type="EMBL" id="CP000958">
    <property type="protein sequence ID" value="ACA91424.1"/>
    <property type="molecule type" value="Genomic_DNA"/>
</dbReference>
<dbReference type="RefSeq" id="WP_006478272.1">
    <property type="nucleotide sequence ID" value="NC_010508.1"/>
</dbReference>
<dbReference type="SMR" id="B1JVN1"/>
<dbReference type="GeneID" id="93191319"/>
<dbReference type="KEGG" id="bcm:Bcenmc03_2263"/>
<dbReference type="HOGENOM" id="CLU_144724_2_0_4"/>
<dbReference type="Proteomes" id="UP000002169">
    <property type="component" value="Chromosome 1"/>
</dbReference>
<dbReference type="GO" id="GO:0030964">
    <property type="term" value="C:NADH dehydrogenase complex"/>
    <property type="evidence" value="ECO:0007669"/>
    <property type="project" value="TreeGrafter"/>
</dbReference>
<dbReference type="GO" id="GO:0005886">
    <property type="term" value="C:plasma membrane"/>
    <property type="evidence" value="ECO:0007669"/>
    <property type="project" value="UniProtKB-SubCell"/>
</dbReference>
<dbReference type="GO" id="GO:0050136">
    <property type="term" value="F:NADH:ubiquinone reductase (non-electrogenic) activity"/>
    <property type="evidence" value="ECO:0007669"/>
    <property type="project" value="UniProtKB-UniRule"/>
</dbReference>
<dbReference type="GO" id="GO:0048038">
    <property type="term" value="F:quinone binding"/>
    <property type="evidence" value="ECO:0007669"/>
    <property type="project" value="UniProtKB-KW"/>
</dbReference>
<dbReference type="GO" id="GO:0042773">
    <property type="term" value="P:ATP synthesis coupled electron transport"/>
    <property type="evidence" value="ECO:0007669"/>
    <property type="project" value="InterPro"/>
</dbReference>
<dbReference type="FunFam" id="1.10.287.3510:FF:000001">
    <property type="entry name" value="NADH-quinone oxidoreductase subunit K"/>
    <property type="match status" value="1"/>
</dbReference>
<dbReference type="Gene3D" id="1.10.287.3510">
    <property type="match status" value="1"/>
</dbReference>
<dbReference type="HAMAP" id="MF_01456">
    <property type="entry name" value="NDH1_NuoK"/>
    <property type="match status" value="1"/>
</dbReference>
<dbReference type="InterPro" id="IPR001133">
    <property type="entry name" value="NADH_UbQ_OxRdtase_chain4L/K"/>
</dbReference>
<dbReference type="InterPro" id="IPR039428">
    <property type="entry name" value="NUOK/Mnh_C1-like"/>
</dbReference>
<dbReference type="NCBIfam" id="NF004320">
    <property type="entry name" value="PRK05715.1-2"/>
    <property type="match status" value="1"/>
</dbReference>
<dbReference type="NCBIfam" id="NF004321">
    <property type="entry name" value="PRK05715.1-3"/>
    <property type="match status" value="1"/>
</dbReference>
<dbReference type="NCBIfam" id="NF004323">
    <property type="entry name" value="PRK05715.1-5"/>
    <property type="match status" value="1"/>
</dbReference>
<dbReference type="PANTHER" id="PTHR11434:SF21">
    <property type="entry name" value="NADH DEHYDROGENASE SUBUNIT 4L-RELATED"/>
    <property type="match status" value="1"/>
</dbReference>
<dbReference type="PANTHER" id="PTHR11434">
    <property type="entry name" value="NADH-UBIQUINONE OXIDOREDUCTASE SUBUNIT ND4L"/>
    <property type="match status" value="1"/>
</dbReference>
<dbReference type="Pfam" id="PF00420">
    <property type="entry name" value="Oxidored_q2"/>
    <property type="match status" value="1"/>
</dbReference>
<proteinExistence type="inferred from homology"/>
<feature type="chain" id="PRO_0000389986" description="NADH-quinone oxidoreductase subunit K">
    <location>
        <begin position="1"/>
        <end position="101"/>
    </location>
</feature>
<feature type="transmembrane region" description="Helical" evidence="1">
    <location>
        <begin position="4"/>
        <end position="24"/>
    </location>
</feature>
<feature type="transmembrane region" description="Helical" evidence="1">
    <location>
        <begin position="30"/>
        <end position="50"/>
    </location>
</feature>
<feature type="transmembrane region" description="Helical" evidence="1">
    <location>
        <begin position="61"/>
        <end position="81"/>
    </location>
</feature>
<sequence>MLTLAHYLVLGAILFAIAIVGIFLNRRNVIIILMSIELMLLAVNTNFVAFSHYLGDVHGQIFVFFVLTVAAAEAAIGLAILVTLFRKLDTINVEDLDQLKG</sequence>
<protein>
    <recommendedName>
        <fullName evidence="1">NADH-quinone oxidoreductase subunit K</fullName>
        <ecNumber evidence="1">7.1.1.-</ecNumber>
    </recommendedName>
    <alternativeName>
        <fullName evidence="1">NADH dehydrogenase I subunit K</fullName>
    </alternativeName>
    <alternativeName>
        <fullName evidence="1">NDH-1 subunit K</fullName>
    </alternativeName>
</protein>
<name>NUOK_BURO0</name>
<evidence type="ECO:0000255" key="1">
    <source>
        <dbReference type="HAMAP-Rule" id="MF_01456"/>
    </source>
</evidence>
<reference key="1">
    <citation type="submission" date="2008-02" db="EMBL/GenBank/DDBJ databases">
        <title>Complete sequence of chromosome 1 of Burkholderia cenocepacia MC0-3.</title>
        <authorList>
            <person name="Copeland A."/>
            <person name="Lucas S."/>
            <person name="Lapidus A."/>
            <person name="Barry K."/>
            <person name="Bruce D."/>
            <person name="Goodwin L."/>
            <person name="Glavina del Rio T."/>
            <person name="Dalin E."/>
            <person name="Tice H."/>
            <person name="Pitluck S."/>
            <person name="Chain P."/>
            <person name="Malfatti S."/>
            <person name="Shin M."/>
            <person name="Vergez L."/>
            <person name="Schmutz J."/>
            <person name="Larimer F."/>
            <person name="Land M."/>
            <person name="Hauser L."/>
            <person name="Kyrpides N."/>
            <person name="Mikhailova N."/>
            <person name="Tiedje J."/>
            <person name="Richardson P."/>
        </authorList>
    </citation>
    <scope>NUCLEOTIDE SEQUENCE [LARGE SCALE GENOMIC DNA]</scope>
    <source>
        <strain>MC0-3</strain>
    </source>
</reference>
<organism>
    <name type="scientific">Burkholderia orbicola (strain MC0-3)</name>
    <dbReference type="NCBI Taxonomy" id="406425"/>
    <lineage>
        <taxon>Bacteria</taxon>
        <taxon>Pseudomonadati</taxon>
        <taxon>Pseudomonadota</taxon>
        <taxon>Betaproteobacteria</taxon>
        <taxon>Burkholderiales</taxon>
        <taxon>Burkholderiaceae</taxon>
        <taxon>Burkholderia</taxon>
        <taxon>Burkholderia cepacia complex</taxon>
        <taxon>Burkholderia orbicola</taxon>
    </lineage>
</organism>
<gene>
    <name evidence="1" type="primary">nuoK</name>
    <name type="ordered locus">Bcenmc03_2263</name>
</gene>
<keyword id="KW-0997">Cell inner membrane</keyword>
<keyword id="KW-1003">Cell membrane</keyword>
<keyword id="KW-0472">Membrane</keyword>
<keyword id="KW-0520">NAD</keyword>
<keyword id="KW-0874">Quinone</keyword>
<keyword id="KW-1278">Translocase</keyword>
<keyword id="KW-0812">Transmembrane</keyword>
<keyword id="KW-1133">Transmembrane helix</keyword>
<keyword id="KW-0813">Transport</keyword>
<keyword id="KW-0830">Ubiquinone</keyword>
<accession>B1JVN1</accession>